<accession>Q1IF66</accession>
<dbReference type="EMBL" id="CT573326">
    <property type="protein sequence ID" value="CAK13688.1"/>
    <property type="molecule type" value="Genomic_DNA"/>
</dbReference>
<dbReference type="RefSeq" id="WP_011532120.1">
    <property type="nucleotide sequence ID" value="NC_008027.1"/>
</dbReference>
<dbReference type="SMR" id="Q1IF66"/>
<dbReference type="STRING" id="384676.PSEEN0770"/>
<dbReference type="GeneID" id="90534904"/>
<dbReference type="KEGG" id="pen:PSEEN0770"/>
<dbReference type="eggNOG" id="COG0691">
    <property type="taxonomic scope" value="Bacteria"/>
</dbReference>
<dbReference type="HOGENOM" id="CLU_108953_3_0_6"/>
<dbReference type="OrthoDB" id="9805462at2"/>
<dbReference type="Proteomes" id="UP000000658">
    <property type="component" value="Chromosome"/>
</dbReference>
<dbReference type="GO" id="GO:0005829">
    <property type="term" value="C:cytosol"/>
    <property type="evidence" value="ECO:0007669"/>
    <property type="project" value="TreeGrafter"/>
</dbReference>
<dbReference type="GO" id="GO:0003723">
    <property type="term" value="F:RNA binding"/>
    <property type="evidence" value="ECO:0007669"/>
    <property type="project" value="UniProtKB-UniRule"/>
</dbReference>
<dbReference type="GO" id="GO:0070929">
    <property type="term" value="P:trans-translation"/>
    <property type="evidence" value="ECO:0007669"/>
    <property type="project" value="UniProtKB-UniRule"/>
</dbReference>
<dbReference type="CDD" id="cd09294">
    <property type="entry name" value="SmpB"/>
    <property type="match status" value="1"/>
</dbReference>
<dbReference type="Gene3D" id="2.40.280.10">
    <property type="match status" value="1"/>
</dbReference>
<dbReference type="HAMAP" id="MF_00023">
    <property type="entry name" value="SmpB"/>
    <property type="match status" value="1"/>
</dbReference>
<dbReference type="InterPro" id="IPR023620">
    <property type="entry name" value="SmpB"/>
</dbReference>
<dbReference type="InterPro" id="IPR000037">
    <property type="entry name" value="SsrA-bd_prot"/>
</dbReference>
<dbReference type="InterPro" id="IPR020081">
    <property type="entry name" value="SsrA-bd_prot_CS"/>
</dbReference>
<dbReference type="NCBIfam" id="NF003843">
    <property type="entry name" value="PRK05422.1"/>
    <property type="match status" value="1"/>
</dbReference>
<dbReference type="NCBIfam" id="TIGR00086">
    <property type="entry name" value="smpB"/>
    <property type="match status" value="1"/>
</dbReference>
<dbReference type="PANTHER" id="PTHR30308:SF2">
    <property type="entry name" value="SSRA-BINDING PROTEIN"/>
    <property type="match status" value="1"/>
</dbReference>
<dbReference type="PANTHER" id="PTHR30308">
    <property type="entry name" value="TMRNA-BINDING COMPONENT OF TRANS-TRANSLATION TAGGING COMPLEX"/>
    <property type="match status" value="1"/>
</dbReference>
<dbReference type="Pfam" id="PF01668">
    <property type="entry name" value="SmpB"/>
    <property type="match status" value="1"/>
</dbReference>
<dbReference type="SUPFAM" id="SSF74982">
    <property type="entry name" value="Small protein B (SmpB)"/>
    <property type="match status" value="1"/>
</dbReference>
<dbReference type="PROSITE" id="PS01317">
    <property type="entry name" value="SSRP"/>
    <property type="match status" value="1"/>
</dbReference>
<reference key="1">
    <citation type="journal article" date="2006" name="Nat. Biotechnol.">
        <title>Complete genome sequence of the entomopathogenic and metabolically versatile soil bacterium Pseudomonas entomophila.</title>
        <authorList>
            <person name="Vodovar N."/>
            <person name="Vallenet D."/>
            <person name="Cruveiller S."/>
            <person name="Rouy Z."/>
            <person name="Barbe V."/>
            <person name="Acosta C."/>
            <person name="Cattolico L."/>
            <person name="Jubin C."/>
            <person name="Lajus A."/>
            <person name="Segurens B."/>
            <person name="Vacherie B."/>
            <person name="Wincker P."/>
            <person name="Weissenbach J."/>
            <person name="Lemaitre B."/>
            <person name="Medigue C."/>
            <person name="Boccard F."/>
        </authorList>
    </citation>
    <scope>NUCLEOTIDE SEQUENCE [LARGE SCALE GENOMIC DNA]</scope>
    <source>
        <strain>L48</strain>
    </source>
</reference>
<sequence length="160" mass="18344">MAKQKKHPTGTIAQNKKARHDYFIEHKFEAGLVLSGWEVKSLRAGKAHLTDSYVLLKDGEAWLFGSHITPLTTASTHVIADPIRTRKLLLNKRELERLEAAVAQKGYTCVAMSLYWSKHLIKCEIALGKGKKEFDKRDTVRERDSNRELQRTMRNKGKEE</sequence>
<name>SSRP_PSEE4</name>
<gene>
    <name evidence="1" type="primary">smpB</name>
    <name type="ordered locus">PSEEN0770</name>
</gene>
<protein>
    <recommendedName>
        <fullName evidence="1">SsrA-binding protein</fullName>
    </recommendedName>
    <alternativeName>
        <fullName evidence="1">Small protein B</fullName>
    </alternativeName>
</protein>
<comment type="function">
    <text evidence="1">Required for rescue of stalled ribosomes mediated by trans-translation. Binds to transfer-messenger RNA (tmRNA), required for stable association of tmRNA with ribosomes. tmRNA and SmpB together mimic tRNA shape, replacing the anticodon stem-loop with SmpB. tmRNA is encoded by the ssrA gene; the 2 termini fold to resemble tRNA(Ala) and it encodes a 'tag peptide', a short internal open reading frame. During trans-translation Ala-aminoacylated tmRNA acts like a tRNA, entering the A-site of stalled ribosomes, displacing the stalled mRNA. The ribosome then switches to translate the ORF on the tmRNA; the nascent peptide is terminated with the 'tag peptide' encoded by the tmRNA and targeted for degradation. The ribosome is freed to recommence translation, which seems to be the essential function of trans-translation.</text>
</comment>
<comment type="subcellular location">
    <subcellularLocation>
        <location evidence="1">Cytoplasm</location>
    </subcellularLocation>
    <text evidence="1">The tmRNA-SmpB complex associates with stalled 70S ribosomes.</text>
</comment>
<comment type="similarity">
    <text evidence="1">Belongs to the SmpB family.</text>
</comment>
<organism>
    <name type="scientific">Pseudomonas entomophila (strain L48)</name>
    <dbReference type="NCBI Taxonomy" id="384676"/>
    <lineage>
        <taxon>Bacteria</taxon>
        <taxon>Pseudomonadati</taxon>
        <taxon>Pseudomonadota</taxon>
        <taxon>Gammaproteobacteria</taxon>
        <taxon>Pseudomonadales</taxon>
        <taxon>Pseudomonadaceae</taxon>
        <taxon>Pseudomonas</taxon>
    </lineage>
</organism>
<evidence type="ECO:0000255" key="1">
    <source>
        <dbReference type="HAMAP-Rule" id="MF_00023"/>
    </source>
</evidence>
<evidence type="ECO:0000256" key="2">
    <source>
        <dbReference type="SAM" id="MobiDB-lite"/>
    </source>
</evidence>
<proteinExistence type="inferred from homology"/>
<keyword id="KW-0963">Cytoplasm</keyword>
<keyword id="KW-0694">RNA-binding</keyword>
<feature type="chain" id="PRO_1000002111" description="SsrA-binding protein">
    <location>
        <begin position="1"/>
        <end position="160"/>
    </location>
</feature>
<feature type="region of interest" description="Disordered" evidence="2">
    <location>
        <begin position="132"/>
        <end position="160"/>
    </location>
</feature>